<sequence>MTNQLMALNQVSVRNRLMPLTALVQQGEQIHIIGPNGSGKSTLLACMAGILPYSGAIDLQQKCLSQYSHCQLARYRAWLSQQISSVPIMPVFQYLQLHLAAHLVNCDGVLSELCSFFKLGKFLETPVGNLSGGEWQRVRLTGVFLQVWPSINLEGKLLLLDEPTNNLDITQVAALDLLIKKFCELGGTVVMSGHDLNHSYDKADRIWLLADGSLVANGKPDEVMKENTLSRVFAADIKCVPEKTDKYWRVFLP</sequence>
<proteinExistence type="inferred from homology"/>
<keyword id="KW-0067">ATP-binding</keyword>
<keyword id="KW-0997">Cell inner membrane</keyword>
<keyword id="KW-1003">Cell membrane</keyword>
<keyword id="KW-0472">Membrane</keyword>
<keyword id="KW-0547">Nucleotide-binding</keyword>
<keyword id="KW-1185">Reference proteome</keyword>
<keyword id="KW-1278">Translocase</keyword>
<keyword id="KW-0813">Transport</keyword>
<dbReference type="EC" id="7.6.2.8" evidence="1"/>
<dbReference type="EMBL" id="BX571867">
    <property type="protein sequence ID" value="CAE15035.1"/>
    <property type="status" value="ALT_INIT"/>
    <property type="molecule type" value="Genomic_DNA"/>
</dbReference>
<dbReference type="SMR" id="Q7N3Q4"/>
<dbReference type="STRING" id="243265.plu2661"/>
<dbReference type="KEGG" id="plu:plu2661"/>
<dbReference type="eggNOG" id="COG4138">
    <property type="taxonomic scope" value="Bacteria"/>
</dbReference>
<dbReference type="HOGENOM" id="CLU_000604_1_11_6"/>
<dbReference type="Proteomes" id="UP000002514">
    <property type="component" value="Chromosome"/>
</dbReference>
<dbReference type="GO" id="GO:0005886">
    <property type="term" value="C:plasma membrane"/>
    <property type="evidence" value="ECO:0007669"/>
    <property type="project" value="UniProtKB-SubCell"/>
</dbReference>
<dbReference type="GO" id="GO:0015420">
    <property type="term" value="F:ABC-type vitamin B12 transporter activity"/>
    <property type="evidence" value="ECO:0007669"/>
    <property type="project" value="UniProtKB-UniRule"/>
</dbReference>
<dbReference type="GO" id="GO:0005524">
    <property type="term" value="F:ATP binding"/>
    <property type="evidence" value="ECO:0007669"/>
    <property type="project" value="UniProtKB-KW"/>
</dbReference>
<dbReference type="GO" id="GO:0016887">
    <property type="term" value="F:ATP hydrolysis activity"/>
    <property type="evidence" value="ECO:0007669"/>
    <property type="project" value="InterPro"/>
</dbReference>
<dbReference type="FunFam" id="3.40.50.300:FF:000462">
    <property type="entry name" value="Vitamin B12 import ATP-binding protein BtuD"/>
    <property type="match status" value="1"/>
</dbReference>
<dbReference type="Gene3D" id="3.40.50.300">
    <property type="entry name" value="P-loop containing nucleotide triphosphate hydrolases"/>
    <property type="match status" value="1"/>
</dbReference>
<dbReference type="HAMAP" id="MF_01005">
    <property type="entry name" value="BtuD"/>
    <property type="match status" value="1"/>
</dbReference>
<dbReference type="InterPro" id="IPR003593">
    <property type="entry name" value="AAA+_ATPase"/>
</dbReference>
<dbReference type="InterPro" id="IPR003439">
    <property type="entry name" value="ABC_transporter-like_ATP-bd"/>
</dbReference>
<dbReference type="InterPro" id="IPR023693">
    <property type="entry name" value="ABC_transptr_BtuD"/>
</dbReference>
<dbReference type="InterPro" id="IPR050153">
    <property type="entry name" value="Metal_Ion_Import_ABC"/>
</dbReference>
<dbReference type="InterPro" id="IPR027417">
    <property type="entry name" value="P-loop_NTPase"/>
</dbReference>
<dbReference type="NCBIfam" id="NF002981">
    <property type="entry name" value="PRK03695.1"/>
    <property type="match status" value="1"/>
</dbReference>
<dbReference type="PANTHER" id="PTHR42734">
    <property type="entry name" value="METAL TRANSPORT SYSTEM ATP-BINDING PROTEIN TM_0124-RELATED"/>
    <property type="match status" value="1"/>
</dbReference>
<dbReference type="PANTHER" id="PTHR42734:SF18">
    <property type="entry name" value="VITAMIN B12 IMPORT ATP-BINDING PROTEIN BTUD"/>
    <property type="match status" value="1"/>
</dbReference>
<dbReference type="Pfam" id="PF00005">
    <property type="entry name" value="ABC_tran"/>
    <property type="match status" value="1"/>
</dbReference>
<dbReference type="SMART" id="SM00382">
    <property type="entry name" value="AAA"/>
    <property type="match status" value="1"/>
</dbReference>
<dbReference type="SUPFAM" id="SSF52540">
    <property type="entry name" value="P-loop containing nucleoside triphosphate hydrolases"/>
    <property type="match status" value="1"/>
</dbReference>
<dbReference type="PROSITE" id="PS50893">
    <property type="entry name" value="ABC_TRANSPORTER_2"/>
    <property type="match status" value="1"/>
</dbReference>
<reference key="1">
    <citation type="journal article" date="2003" name="Nat. Biotechnol.">
        <title>The genome sequence of the entomopathogenic bacterium Photorhabdus luminescens.</title>
        <authorList>
            <person name="Duchaud E."/>
            <person name="Rusniok C."/>
            <person name="Frangeul L."/>
            <person name="Buchrieser C."/>
            <person name="Givaudan A."/>
            <person name="Taourit S."/>
            <person name="Bocs S."/>
            <person name="Boursaux-Eude C."/>
            <person name="Chandler M."/>
            <person name="Charles J.-F."/>
            <person name="Dassa E."/>
            <person name="Derose R."/>
            <person name="Derzelle S."/>
            <person name="Freyssinet G."/>
            <person name="Gaudriault S."/>
            <person name="Medigue C."/>
            <person name="Lanois A."/>
            <person name="Powell K."/>
            <person name="Siguier P."/>
            <person name="Vincent R."/>
            <person name="Wingate V."/>
            <person name="Zouine M."/>
            <person name="Glaser P."/>
            <person name="Boemare N."/>
            <person name="Danchin A."/>
            <person name="Kunst F."/>
        </authorList>
    </citation>
    <scope>NUCLEOTIDE SEQUENCE [LARGE SCALE GENOMIC DNA]</scope>
    <source>
        <strain>DSM 15139 / CIP 105565 / TT01</strain>
    </source>
</reference>
<accession>Q7N3Q4</accession>
<name>BTUD_PHOLL</name>
<protein>
    <recommendedName>
        <fullName evidence="1">Vitamin B12 import ATP-binding protein BtuD</fullName>
        <ecNumber evidence="1">7.6.2.8</ecNumber>
    </recommendedName>
    <alternativeName>
        <fullName evidence="1">Vitamin B12-transporting ATPase</fullName>
    </alternativeName>
</protein>
<comment type="function">
    <text evidence="1">Part of the ABC transporter complex BtuCDF involved in vitamin B12 import. Responsible for energy coupling to the transport system.</text>
</comment>
<comment type="catalytic activity">
    <reaction evidence="1">
        <text>an R-cob(III)alamin(out) + ATP + H2O = an R-cob(III)alamin(in) + ADP + phosphate + H(+)</text>
        <dbReference type="Rhea" id="RHEA:17873"/>
        <dbReference type="ChEBI" id="CHEBI:15377"/>
        <dbReference type="ChEBI" id="CHEBI:15378"/>
        <dbReference type="ChEBI" id="CHEBI:30616"/>
        <dbReference type="ChEBI" id="CHEBI:43474"/>
        <dbReference type="ChEBI" id="CHEBI:140785"/>
        <dbReference type="ChEBI" id="CHEBI:456216"/>
        <dbReference type="EC" id="7.6.2.8"/>
    </reaction>
</comment>
<comment type="subunit">
    <text evidence="1">The complex is composed of two ATP-binding proteins (BtuD), two transmembrane proteins (BtuC) and a solute-binding protein (BtuF).</text>
</comment>
<comment type="subcellular location">
    <subcellularLocation>
        <location evidence="1">Cell inner membrane</location>
        <topology evidence="1">Peripheral membrane protein</topology>
    </subcellularLocation>
</comment>
<comment type="similarity">
    <text evidence="1">Belongs to the ABC transporter superfamily. Vitamin B12 importer (TC 3.A.1.13.1) family.</text>
</comment>
<comment type="sequence caution" evidence="2">
    <conflict type="erroneous initiation">
        <sequence resource="EMBL-CDS" id="CAE15035"/>
    </conflict>
</comment>
<organism>
    <name type="scientific">Photorhabdus laumondii subsp. laumondii (strain DSM 15139 / CIP 105565 / TT01)</name>
    <name type="common">Photorhabdus luminescens subsp. laumondii</name>
    <dbReference type="NCBI Taxonomy" id="243265"/>
    <lineage>
        <taxon>Bacteria</taxon>
        <taxon>Pseudomonadati</taxon>
        <taxon>Pseudomonadota</taxon>
        <taxon>Gammaproteobacteria</taxon>
        <taxon>Enterobacterales</taxon>
        <taxon>Morganellaceae</taxon>
        <taxon>Photorhabdus</taxon>
    </lineage>
</organism>
<feature type="chain" id="PRO_0000091954" description="Vitamin B12 import ATP-binding protein BtuD">
    <location>
        <begin position="1"/>
        <end position="253"/>
    </location>
</feature>
<feature type="domain" description="ABC transporter" evidence="1">
    <location>
        <begin position="1"/>
        <end position="236"/>
    </location>
</feature>
<feature type="binding site" evidence="1">
    <location>
        <begin position="34"/>
        <end position="41"/>
    </location>
    <ligand>
        <name>ATP</name>
        <dbReference type="ChEBI" id="CHEBI:30616"/>
    </ligand>
</feature>
<evidence type="ECO:0000255" key="1">
    <source>
        <dbReference type="HAMAP-Rule" id="MF_01005"/>
    </source>
</evidence>
<evidence type="ECO:0000305" key="2"/>
<gene>
    <name evidence="1" type="primary">btuD</name>
    <name type="ordered locus">plu2661</name>
</gene>